<name>LECG_BITAR</name>
<evidence type="ECO:0000250" key="1"/>
<evidence type="ECO:0000250" key="2">
    <source>
        <dbReference type="UniProtKB" id="P21963"/>
    </source>
</evidence>
<evidence type="ECO:0000255" key="3">
    <source>
        <dbReference type="PROSITE-ProRule" id="PRU00040"/>
    </source>
</evidence>
<evidence type="ECO:0000269" key="4">
    <source>
    </source>
</evidence>
<evidence type="ECO:0000269" key="5">
    <source>
    </source>
</evidence>
<evidence type="ECO:0000305" key="6"/>
<dbReference type="SMR" id="Q9PSN0"/>
<dbReference type="GO" id="GO:0005576">
    <property type="term" value="C:extracellular region"/>
    <property type="evidence" value="ECO:0000314"/>
    <property type="project" value="UniProtKB"/>
</dbReference>
<dbReference type="GO" id="GO:0032991">
    <property type="term" value="C:protein-containing complex"/>
    <property type="evidence" value="ECO:0000353"/>
    <property type="project" value="UniProtKB"/>
</dbReference>
<dbReference type="GO" id="GO:0005534">
    <property type="term" value="F:galactose binding"/>
    <property type="evidence" value="ECO:0000314"/>
    <property type="project" value="UniProtKB"/>
</dbReference>
<dbReference type="GO" id="GO:0030395">
    <property type="term" value="F:lactose binding"/>
    <property type="evidence" value="ECO:0000314"/>
    <property type="project" value="UniProtKB"/>
</dbReference>
<dbReference type="GO" id="GO:0046872">
    <property type="term" value="F:metal ion binding"/>
    <property type="evidence" value="ECO:0007669"/>
    <property type="project" value="UniProtKB-KW"/>
</dbReference>
<dbReference type="GO" id="GO:0033296">
    <property type="term" value="F:rhamnose binding"/>
    <property type="evidence" value="ECO:0000314"/>
    <property type="project" value="UniProtKB"/>
</dbReference>
<dbReference type="GO" id="GO:0090729">
    <property type="term" value="F:toxin activity"/>
    <property type="evidence" value="ECO:0000314"/>
    <property type="project" value="UniProtKB"/>
</dbReference>
<dbReference type="GO" id="GO:0016339">
    <property type="term" value="P:calcium-dependent cell-cell adhesion via plasma membrane cell adhesion molecules"/>
    <property type="evidence" value="ECO:0000314"/>
    <property type="project" value="UniProtKB"/>
</dbReference>
<dbReference type="GO" id="GO:0007157">
    <property type="term" value="P:heterophilic cell-cell adhesion via plasma membrane cell adhesion molecules"/>
    <property type="evidence" value="ECO:0000314"/>
    <property type="project" value="UniProtKB"/>
</dbReference>
<dbReference type="GO" id="GO:0140548">
    <property type="term" value="P:venom-mediated blood agglutination in another organism"/>
    <property type="evidence" value="ECO:0000314"/>
    <property type="project" value="UniProtKB"/>
</dbReference>
<dbReference type="GO" id="GO:0035738">
    <property type="term" value="P:venom-mediated perturbation of biological process"/>
    <property type="evidence" value="ECO:0000314"/>
    <property type="project" value="UniProtKB"/>
</dbReference>
<dbReference type="CDD" id="cd03594">
    <property type="entry name" value="CLECT_REG-1_like"/>
    <property type="match status" value="1"/>
</dbReference>
<dbReference type="FunFam" id="3.10.100.10:FF:000015">
    <property type="entry name" value="C-type lectin Cal"/>
    <property type="match status" value="1"/>
</dbReference>
<dbReference type="Gene3D" id="3.10.100.10">
    <property type="entry name" value="Mannose-Binding Protein A, subunit A"/>
    <property type="match status" value="1"/>
</dbReference>
<dbReference type="InterPro" id="IPR001304">
    <property type="entry name" value="C-type_lectin-like"/>
</dbReference>
<dbReference type="InterPro" id="IPR016186">
    <property type="entry name" value="C-type_lectin-like/link_sf"/>
</dbReference>
<dbReference type="InterPro" id="IPR050111">
    <property type="entry name" value="C-type_lectin/snaclec_domain"/>
</dbReference>
<dbReference type="InterPro" id="IPR018378">
    <property type="entry name" value="C-type_lectin_CS"/>
</dbReference>
<dbReference type="InterPro" id="IPR016187">
    <property type="entry name" value="CTDL_fold"/>
</dbReference>
<dbReference type="PANTHER" id="PTHR22803">
    <property type="entry name" value="MANNOSE, PHOSPHOLIPASE, LECTIN RECEPTOR RELATED"/>
    <property type="match status" value="1"/>
</dbReference>
<dbReference type="Pfam" id="PF00059">
    <property type="entry name" value="Lectin_C"/>
    <property type="match status" value="1"/>
</dbReference>
<dbReference type="SMART" id="SM00034">
    <property type="entry name" value="CLECT"/>
    <property type="match status" value="1"/>
</dbReference>
<dbReference type="SUPFAM" id="SSF56436">
    <property type="entry name" value="C-type lectin-like"/>
    <property type="match status" value="1"/>
</dbReference>
<dbReference type="PROSITE" id="PS00615">
    <property type="entry name" value="C_TYPE_LECTIN_1"/>
    <property type="match status" value="1"/>
</dbReference>
<dbReference type="PROSITE" id="PS50041">
    <property type="entry name" value="C_TYPE_LECTIN_2"/>
    <property type="match status" value="1"/>
</dbReference>
<reference evidence="6" key="1">
    <citation type="journal article" date="1995" name="Biol. Pharm. Bull.">
        <title>Primary structure of the lectin from the venom of Bitis arietans (puff-adder).</title>
        <authorList>
            <person name="Nikai T."/>
            <person name="Suzuki J."/>
            <person name="Komori Y."/>
            <person name="Ohkura M."/>
            <person name="Ohizumi Y."/>
            <person name="Sugihara H."/>
        </authorList>
    </citation>
    <scope>PROTEIN SEQUENCE</scope>
    <scope>FUNCTION</scope>
    <source>
        <tissue>Venom</tissue>
    </source>
</reference>
<reference key="2">
    <citation type="journal article" date="1999" name="Toxicon">
        <title>Primary structure and biological activity of snake venom lectin (APL) from Agkistrodon p. piscivorus (Eastern cottonmouth).</title>
        <authorList>
            <person name="Komori Y."/>
            <person name="Nikai T."/>
            <person name="Tohkai T."/>
            <person name="Sugihara H."/>
        </authorList>
    </citation>
    <scope>FUNCTION</scope>
    <source>
        <tissue>Venom</tissue>
    </source>
</reference>
<sequence length="135" mass="16158">NNCPPDWLPMNGLCYKIFDELKAWEDAERFCRKYKPGCHLASFHQYGESLEIAEYISDYHKGQAEVWIGLWDKKKDFSWEWTDRSCTDYLTWDKNQPDHYQNKEFCVELVSLTGYRLWNDQVCGSKNAFLCQCKF</sequence>
<organism>
    <name type="scientific">Bitis arietans</name>
    <name type="common">African puff adder</name>
    <dbReference type="NCBI Taxonomy" id="8692"/>
    <lineage>
        <taxon>Eukaryota</taxon>
        <taxon>Metazoa</taxon>
        <taxon>Chordata</taxon>
        <taxon>Craniata</taxon>
        <taxon>Vertebrata</taxon>
        <taxon>Euteleostomi</taxon>
        <taxon>Lepidosauria</taxon>
        <taxon>Squamata</taxon>
        <taxon>Bifurcata</taxon>
        <taxon>Unidentata</taxon>
        <taxon>Episquamata</taxon>
        <taxon>Toxicofera</taxon>
        <taxon>Serpentes</taxon>
        <taxon>Colubroidea</taxon>
        <taxon>Viperidae</taxon>
        <taxon>Viperinae</taxon>
        <taxon>Bitis</taxon>
    </lineage>
</organism>
<proteinExistence type="evidence at protein level"/>
<accession>Q9PSN0</accession>
<protein>
    <recommendedName>
        <fullName>C-type lectin PAL</fullName>
        <shortName>CTL</shortName>
    </recommendedName>
    <alternativeName>
        <fullName>BaL</fullName>
    </alternativeName>
    <alternativeName>
        <fullName>Galactose-specific lectin</fullName>
    </alternativeName>
</protein>
<comment type="function">
    <text evidence="4 5">Galactose-binding lectin which recognizes specific carbohydrate structures and agglutinates a variety of animal cells by binding to cell-surface glycoproteins and glycolipids. This is a calcium-dependent lectin (PubMed:8593494). Shows high hemagglutinating activity (MHC is 0.25 ug/ml on rabbit erythrocytes) (PubMed:10484740).</text>
</comment>
<comment type="subunit">
    <text evidence="2">Homodimer; disulfide-linked.</text>
</comment>
<comment type="subcellular location">
    <subcellularLocation>
        <location evidence="6">Secreted</location>
    </subcellularLocation>
</comment>
<comment type="tissue specificity">
    <text>Expressed by the venom gland.</text>
</comment>
<comment type="similarity">
    <text evidence="6">Belongs to the true venom lectin family.</text>
</comment>
<keyword id="KW-0106">Calcium</keyword>
<keyword id="KW-0903">Direct protein sequencing</keyword>
<keyword id="KW-1015">Disulfide bond</keyword>
<keyword id="KW-0348">Hemagglutinin</keyword>
<keyword id="KW-0430">Lectin</keyword>
<keyword id="KW-0479">Metal-binding</keyword>
<keyword id="KW-0964">Secreted</keyword>
<feature type="chain" id="PRO_0000046642" description="C-type lectin PAL">
    <location>
        <begin position="1"/>
        <end position="135"/>
    </location>
</feature>
<feature type="domain" description="C-type lectin" evidence="3">
    <location>
        <begin position="10"/>
        <end position="132"/>
    </location>
</feature>
<feature type="short sequence motif" description="Galactose-binding">
    <location>
        <begin position="96"/>
        <end position="98"/>
    </location>
</feature>
<feature type="binding site" evidence="1">
    <location>
        <position position="96"/>
    </location>
    <ligand>
        <name>Ca(2+)</name>
        <dbReference type="ChEBI" id="CHEBI:29108"/>
    </ligand>
</feature>
<feature type="binding site" evidence="1">
    <location>
        <position position="98"/>
    </location>
    <ligand>
        <name>Ca(2+)</name>
        <dbReference type="ChEBI" id="CHEBI:29108"/>
    </ligand>
</feature>
<feature type="binding site" evidence="1">
    <location>
        <position position="104"/>
    </location>
    <ligand>
        <name>Ca(2+)</name>
        <dbReference type="ChEBI" id="CHEBI:29108"/>
    </ligand>
</feature>
<feature type="binding site" evidence="1">
    <location>
        <position position="119"/>
    </location>
    <ligand>
        <name>Ca(2+)</name>
        <dbReference type="ChEBI" id="CHEBI:29108"/>
    </ligand>
</feature>
<feature type="binding site" evidence="1">
    <location>
        <position position="120"/>
    </location>
    <ligand>
        <name>Ca(2+)</name>
        <dbReference type="ChEBI" id="CHEBI:29108"/>
    </ligand>
</feature>
<feature type="disulfide bond" evidence="3">
    <location>
        <begin position="3"/>
        <end position="14"/>
    </location>
</feature>
<feature type="disulfide bond" evidence="3">
    <location>
        <begin position="31"/>
        <end position="131"/>
    </location>
</feature>
<feature type="disulfide bond" evidence="3">
    <location>
        <begin position="38"/>
        <end position="133"/>
    </location>
</feature>
<feature type="disulfide bond" description="Interchain" evidence="3">
    <location>
        <position position="86"/>
    </location>
</feature>
<feature type="disulfide bond" evidence="3">
    <location>
        <begin position="106"/>
        <end position="123"/>
    </location>
</feature>